<evidence type="ECO:0000255" key="1"/>
<evidence type="ECO:0000255" key="2">
    <source>
        <dbReference type="PROSITE-ProRule" id="PRU00521"/>
    </source>
</evidence>
<evidence type="ECO:0000256" key="3">
    <source>
        <dbReference type="SAM" id="MobiDB-lite"/>
    </source>
</evidence>
<evidence type="ECO:0000303" key="4">
    <source>
    </source>
</evidence>
<dbReference type="EMBL" id="Z28332">
    <property type="protein sequence ID" value="CAA82186.1"/>
    <property type="molecule type" value="mRNA"/>
</dbReference>
<dbReference type="PIR" id="JC2033">
    <property type="entry name" value="JC2033"/>
</dbReference>
<dbReference type="SMR" id="P35409"/>
<dbReference type="GO" id="GO:0005886">
    <property type="term" value="C:plasma membrane"/>
    <property type="evidence" value="ECO:0007669"/>
    <property type="project" value="UniProtKB-SubCell"/>
</dbReference>
<dbReference type="GO" id="GO:0008528">
    <property type="term" value="F:G protein-coupled peptide receptor activity"/>
    <property type="evidence" value="ECO:0007669"/>
    <property type="project" value="TreeGrafter"/>
</dbReference>
<dbReference type="GO" id="GO:0016500">
    <property type="term" value="F:protein-hormone receptor activity"/>
    <property type="evidence" value="ECO:0007669"/>
    <property type="project" value="InterPro"/>
</dbReference>
<dbReference type="GO" id="GO:0007189">
    <property type="term" value="P:adenylate cyclase-activating G protein-coupled receptor signaling pathway"/>
    <property type="evidence" value="ECO:0007669"/>
    <property type="project" value="TreeGrafter"/>
</dbReference>
<dbReference type="GO" id="GO:0009755">
    <property type="term" value="P:hormone-mediated signaling pathway"/>
    <property type="evidence" value="ECO:0007669"/>
    <property type="project" value="TreeGrafter"/>
</dbReference>
<dbReference type="CDD" id="cd15136">
    <property type="entry name" value="7tmA_Glyco_hormone_R"/>
    <property type="match status" value="1"/>
</dbReference>
<dbReference type="Gene3D" id="1.20.1070.10">
    <property type="entry name" value="Rhodopsin 7-helix transmembrane proteins"/>
    <property type="match status" value="1"/>
</dbReference>
<dbReference type="Gene3D" id="3.80.10.10">
    <property type="entry name" value="Ribonuclease Inhibitor"/>
    <property type="match status" value="1"/>
</dbReference>
<dbReference type="InterPro" id="IPR000276">
    <property type="entry name" value="GPCR_Rhodpsn"/>
</dbReference>
<dbReference type="InterPro" id="IPR017452">
    <property type="entry name" value="GPCR_Rhodpsn_7TM"/>
</dbReference>
<dbReference type="InterPro" id="IPR002131">
    <property type="entry name" value="Gphrmn_rcpt_fam"/>
</dbReference>
<dbReference type="InterPro" id="IPR001611">
    <property type="entry name" value="Leu-rich_rpt"/>
</dbReference>
<dbReference type="InterPro" id="IPR003591">
    <property type="entry name" value="Leu-rich_rpt_typical-subtyp"/>
</dbReference>
<dbReference type="InterPro" id="IPR026906">
    <property type="entry name" value="LRR_5"/>
</dbReference>
<dbReference type="InterPro" id="IPR032675">
    <property type="entry name" value="LRR_dom_sf"/>
</dbReference>
<dbReference type="PANTHER" id="PTHR24372">
    <property type="entry name" value="GLYCOPROTEIN HORMONE RECEPTOR"/>
    <property type="match status" value="1"/>
</dbReference>
<dbReference type="PANTHER" id="PTHR24372:SF74">
    <property type="entry name" value="LP13728P"/>
    <property type="match status" value="1"/>
</dbReference>
<dbReference type="Pfam" id="PF00001">
    <property type="entry name" value="7tm_1"/>
    <property type="match status" value="1"/>
</dbReference>
<dbReference type="Pfam" id="PF13306">
    <property type="entry name" value="LRR_5"/>
    <property type="match status" value="1"/>
</dbReference>
<dbReference type="Pfam" id="PF13855">
    <property type="entry name" value="LRR_8"/>
    <property type="match status" value="1"/>
</dbReference>
<dbReference type="PRINTS" id="PR00373">
    <property type="entry name" value="GLYCHORMONER"/>
</dbReference>
<dbReference type="PRINTS" id="PR00237">
    <property type="entry name" value="GPCRRHODOPSN"/>
</dbReference>
<dbReference type="SMART" id="SM00369">
    <property type="entry name" value="LRR_TYP"/>
    <property type="match status" value="3"/>
</dbReference>
<dbReference type="SUPFAM" id="SSF81321">
    <property type="entry name" value="Family A G protein-coupled receptor-like"/>
    <property type="match status" value="1"/>
</dbReference>
<dbReference type="SUPFAM" id="SSF52058">
    <property type="entry name" value="L domain-like"/>
    <property type="match status" value="1"/>
</dbReference>
<dbReference type="PROSITE" id="PS00237">
    <property type="entry name" value="G_PROTEIN_RECEP_F1_1"/>
    <property type="match status" value="1"/>
</dbReference>
<dbReference type="PROSITE" id="PS50262">
    <property type="entry name" value="G_PROTEIN_RECEP_F1_2"/>
    <property type="match status" value="1"/>
</dbReference>
<dbReference type="PROSITE" id="PS51450">
    <property type="entry name" value="LRR"/>
    <property type="match status" value="4"/>
</dbReference>
<name>GLHR_ANTEL</name>
<reference key="1">
    <citation type="journal article" date="1993" name="Biochem. Biophys. Res. Commun.">
        <title>Molecular cloning of a novel, putative G protein-coupled receptor from sea anemones structurally related to members of the FSH, TSH, LH/CG receptor family from mammals.</title>
        <authorList>
            <person name="Nothacker H.-P."/>
            <person name="Grimmelikhuijzen C.J.P."/>
        </authorList>
    </citation>
    <scope>NUCLEOTIDE SEQUENCE [MRNA] (ISOFORMS LONG AND SHORT)</scope>
</reference>
<feature type="signal peptide" evidence="1">
    <location>
        <begin position="1"/>
        <end position="27"/>
    </location>
</feature>
<feature type="chain" id="PRO_0000012790" description="Probable glycoprotein hormone G-protein coupled receptor">
    <location>
        <begin position="28"/>
        <end position="925"/>
    </location>
</feature>
<feature type="topological domain" description="Extracellular" evidence="1">
    <location>
        <begin position="28"/>
        <end position="529"/>
    </location>
</feature>
<feature type="transmembrane region" description="Helical; Name=1" evidence="1">
    <location>
        <begin position="530"/>
        <end position="551"/>
    </location>
</feature>
<feature type="topological domain" description="Cytoplasmic" evidence="1">
    <location>
        <begin position="552"/>
        <end position="561"/>
    </location>
</feature>
<feature type="transmembrane region" description="Helical; Name=2" evidence="1">
    <location>
        <begin position="562"/>
        <end position="584"/>
    </location>
</feature>
<feature type="topological domain" description="Extracellular" evidence="1">
    <location>
        <begin position="585"/>
        <end position="606"/>
    </location>
</feature>
<feature type="transmembrane region" description="Helical; Name=3" evidence="1">
    <location>
        <begin position="607"/>
        <end position="628"/>
    </location>
</feature>
<feature type="topological domain" description="Cytoplasmic" evidence="1">
    <location>
        <begin position="629"/>
        <end position="651"/>
    </location>
</feature>
<feature type="transmembrane region" description="Helical; Name=4" evidence="1">
    <location>
        <begin position="652"/>
        <end position="673"/>
    </location>
</feature>
<feature type="topological domain" description="Extracellular" evidence="1">
    <location>
        <begin position="674"/>
        <end position="691"/>
    </location>
</feature>
<feature type="transmembrane region" description="Helical; Name=5" evidence="1">
    <location>
        <begin position="692"/>
        <end position="712"/>
    </location>
</feature>
<feature type="topological domain" description="Cytoplasmic" evidence="1">
    <location>
        <begin position="713"/>
        <end position="739"/>
    </location>
</feature>
<feature type="transmembrane region" description="Helical; Name=6" evidence="1">
    <location>
        <begin position="740"/>
        <end position="763"/>
    </location>
</feature>
<feature type="topological domain" description="Extracellular" evidence="1">
    <location>
        <begin position="764"/>
        <end position="774"/>
    </location>
</feature>
<feature type="transmembrane region" description="Helical; Name=7" evidence="1">
    <location>
        <begin position="775"/>
        <end position="795"/>
    </location>
</feature>
<feature type="topological domain" description="Cytoplasmic" evidence="1">
    <location>
        <begin position="796"/>
        <end position="925"/>
    </location>
</feature>
<feature type="repeat" description="LRR 1">
    <location>
        <begin position="85"/>
        <end position="106"/>
    </location>
</feature>
<feature type="repeat" description="LRR 2">
    <location>
        <begin position="110"/>
        <end position="131"/>
    </location>
</feature>
<feature type="repeat" description="LRR 3">
    <location>
        <begin position="134"/>
        <end position="155"/>
    </location>
</feature>
<feature type="repeat" description="LRR 4">
    <location>
        <begin position="156"/>
        <end position="180"/>
    </location>
</feature>
<feature type="repeat" description="LRR 5">
    <location>
        <begin position="181"/>
        <end position="202"/>
    </location>
</feature>
<feature type="repeat" description="LRR 6">
    <location>
        <begin position="203"/>
        <end position="224"/>
    </location>
</feature>
<feature type="repeat" description="LRR 7">
    <location>
        <begin position="230"/>
        <end position="250"/>
    </location>
</feature>
<feature type="repeat" description="LRR 8">
    <location>
        <begin position="251"/>
        <end position="273"/>
    </location>
</feature>
<feature type="repeat" description="1; truncated">
    <location>
        <begin position="333"/>
        <end position="349"/>
    </location>
</feature>
<feature type="repeat" description="2">
    <location>
        <begin position="350"/>
        <end position="384"/>
    </location>
</feature>
<feature type="repeat" description="3">
    <location>
        <begin position="385"/>
        <end position="419"/>
    </location>
</feature>
<feature type="repeat" description="4">
    <location>
        <begin position="420"/>
        <end position="453"/>
    </location>
</feature>
<feature type="repeat" description="5; truncated">
    <location>
        <begin position="454"/>
        <end position="461"/>
    </location>
</feature>
<feature type="region of interest" description="Disordered" evidence="3">
    <location>
        <begin position="299"/>
        <end position="493"/>
    </location>
</feature>
<feature type="region of interest" description="5 X approximate tandem repeats">
    <location>
        <begin position="333"/>
        <end position="461"/>
    </location>
</feature>
<feature type="region of interest" description="Disordered" evidence="3">
    <location>
        <begin position="904"/>
        <end position="925"/>
    </location>
</feature>
<feature type="compositionally biased region" description="Polar residues" evidence="3">
    <location>
        <begin position="301"/>
        <end position="318"/>
    </location>
</feature>
<feature type="compositionally biased region" description="Gly residues" evidence="3">
    <location>
        <begin position="341"/>
        <end position="362"/>
    </location>
</feature>
<feature type="compositionally biased region" description="Polar residues" evidence="3">
    <location>
        <begin position="365"/>
        <end position="375"/>
    </location>
</feature>
<feature type="compositionally biased region" description="Gly residues" evidence="3">
    <location>
        <begin position="376"/>
        <end position="397"/>
    </location>
</feature>
<feature type="compositionally biased region" description="Polar residues" evidence="3">
    <location>
        <begin position="400"/>
        <end position="410"/>
    </location>
</feature>
<feature type="compositionally biased region" description="Gly residues" evidence="3">
    <location>
        <begin position="411"/>
        <end position="432"/>
    </location>
</feature>
<feature type="compositionally biased region" description="Polar residues" evidence="3">
    <location>
        <begin position="434"/>
        <end position="445"/>
    </location>
</feature>
<feature type="compositionally biased region" description="Gly residues" evidence="3">
    <location>
        <begin position="446"/>
        <end position="462"/>
    </location>
</feature>
<feature type="compositionally biased region" description="Polar residues" evidence="3">
    <location>
        <begin position="476"/>
        <end position="493"/>
    </location>
</feature>
<feature type="glycosylation site" description="N-linked (GlcNAc...) asparagine" evidence="1">
    <location>
        <position position="61"/>
    </location>
</feature>
<feature type="glycosylation site" description="N-linked (GlcNAc...) asparagine" evidence="1">
    <location>
        <position position="152"/>
    </location>
</feature>
<feature type="glycosylation site" description="N-linked (GlcNAc...) asparagine" evidence="1">
    <location>
        <position position="212"/>
    </location>
</feature>
<feature type="glycosylation site" description="N-linked (GlcNAc...) asparagine" evidence="1">
    <location>
        <position position="435"/>
    </location>
</feature>
<feature type="glycosylation site" description="N-linked (GlcNAc...) asparagine" evidence="1">
    <location>
        <position position="495"/>
    </location>
</feature>
<feature type="splice variant" id="VSP_001983" description="In isoform Short." evidence="4">
    <location>
        <begin position="235"/>
        <end position="925"/>
    </location>
</feature>
<accession>P35409</accession>
<keyword id="KW-0025">Alternative splicing</keyword>
<keyword id="KW-1003">Cell membrane</keyword>
<keyword id="KW-0297">G-protein coupled receptor</keyword>
<keyword id="KW-0325">Glycoprotein</keyword>
<keyword id="KW-0433">Leucine-rich repeat</keyword>
<keyword id="KW-0472">Membrane</keyword>
<keyword id="KW-0675">Receptor</keyword>
<keyword id="KW-0677">Repeat</keyword>
<keyword id="KW-0732">Signal</keyword>
<keyword id="KW-0807">Transducer</keyword>
<keyword id="KW-0812">Transmembrane</keyword>
<keyword id="KW-1133">Transmembrane helix</keyword>
<proteinExistence type="evidence at transcript level"/>
<protein>
    <recommendedName>
        <fullName>Probable glycoprotein hormone G-protein coupled receptor</fullName>
    </recommendedName>
</protein>
<comment type="function">
    <text>Probable receptor for a glycoprotein hormone.</text>
</comment>
<comment type="subcellular location">
    <subcellularLocation>
        <location>Cell membrane</location>
        <topology>Multi-pass membrane protein</topology>
    </subcellularLocation>
</comment>
<comment type="alternative products">
    <event type="alternative splicing"/>
    <isoform>
        <id>P35409-1</id>
        <name>Long</name>
        <sequence type="displayed"/>
    </isoform>
    <isoform>
        <id>P35409-2</id>
        <name>Short</name>
        <sequence type="described" ref="VSP_001983"/>
    </isoform>
</comment>
<comment type="similarity">
    <text evidence="2">Belongs to the G-protein coupled receptor 1 family. FSH/LSH/TSH subfamily.</text>
</comment>
<sequence length="925" mass="100060">MEDRGICPRVLQVLFLVVLILISPVYAAKNDACTKCSCNPKGMVSCFELQEFPPLATFPRNTTTLHVSFSGEISIPSDILQHLEKLKYLTLNNNKIKNIAKFRVKNGYSSLITLSYTHNIIETIENGAFDDLQQLTQLDLSNNRLKEFPIFNKTSSVTKLYLRGNPGITKLPRQSLGNLPSLENLFMERTGIQEIPAGIFRQNTRLINLYFNKTKALERINEDAFDEDSSLKTLVLDETSVTSLPSRGLKNLHFLSLKDVPNFWQLPELDSIREVYLSPYNGFLCCEFESGEKYGKDCTMQKPSTEENNGQTTASSPTKEPATSGLGGGTHLSTQPHTTSGFGGGGFPGGGGGFPGGGGFPAGGSKTSTQPHTTSGFGGGGFPGGGGGFPGGGGFPAGGSKTSTQPHTTSGFGGGGFPGGGGGFPGGGGFPGGSNTSTQPHTTSNSGGGGFPGGGGFPGGGTPFTNQFTIPHIPNVHQSTADPPTLIPHSNHTPNGTQFHQCSKIPVQCVPKSDAFHPCEDIMGYVWLTVVSFMVGAVALVANLVVALVLLTSQRRLNVTRFLMCNLAFADFILGLYIFILTSVSAVTRGDYHNYVQQWQNGAGCKILGFLAVFSSELSLFTLVMMTIERFYAIVHAMHMNARLSFRKTVRFMIGGWIFALVMAVVPLTGVSGYSKVAICLPFDVSDATSTAYVAFLLLVNGASFISVMYLYSRMLYVVVSGGDMEGAPKRNDSKVAKRMAILVFTDMLCWAPIAFFGLLAAFGQTLLTVTQSKILLVFFFPINSICNPFLYAFFTKAFKRELFTALSRIGFCKFRALKYNGTLSSFLYSRSRRHHSTVNAEHSTPKSKHASTMSLRQSHQDLYRKESKTAESLNGICNAGFNAHEETRTSPGSVRYVRSLRGVTKSSSPPHLKLQKQKILQSPS</sequence>
<organism>
    <name type="scientific">Anthopleura elegantissima</name>
    <name type="common">Green aggregating anemone</name>
    <name type="synonym">Actinia elegantissima</name>
    <dbReference type="NCBI Taxonomy" id="6110"/>
    <lineage>
        <taxon>Eukaryota</taxon>
        <taxon>Metazoa</taxon>
        <taxon>Cnidaria</taxon>
        <taxon>Anthozoa</taxon>
        <taxon>Hexacorallia</taxon>
        <taxon>Actiniaria</taxon>
        <taxon>Actiniidae</taxon>
        <taxon>Anthopleura</taxon>
    </lineage>
</organism>